<reference key="1">
    <citation type="journal article" date="2011" name="J. Bacteriol.">
        <title>Comparative genomics of 28 Salmonella enterica isolates: evidence for CRISPR-mediated adaptive sublineage evolution.</title>
        <authorList>
            <person name="Fricke W.F."/>
            <person name="Mammel M.K."/>
            <person name="McDermott P.F."/>
            <person name="Tartera C."/>
            <person name="White D.G."/>
            <person name="Leclerc J.E."/>
            <person name="Ravel J."/>
            <person name="Cebula T.A."/>
        </authorList>
    </citation>
    <scope>NUCLEOTIDE SEQUENCE [LARGE SCALE GENOMIC DNA]</scope>
    <source>
        <strain>CT_02021853</strain>
    </source>
</reference>
<proteinExistence type="inferred from homology"/>
<sequence length="235" mass="25246">MSNTPIELKGSSFTLSVVHLHEAEPEVIRQALEDKIAQAPAFLKHAPVVINVSGLESPVNWPELHKIVTSTGLRIIGVSGCKDASLKVEIDRMGLPLLTEGKEKAVRPAPVEPATPSEPPQNANPITKTRLIDVPVRSGQRIYAPQCDLIVTSHVSAGAELIADGNIHVYGMMRGRALAGASGDREAQIFCTHLTAELVSIAGVYWLSDKIPAEFYGKAARLRLADNALTVQPLN</sequence>
<feature type="chain" id="PRO_1000114288" description="Probable septum site-determining protein MinC">
    <location>
        <begin position="1"/>
        <end position="235"/>
    </location>
</feature>
<feature type="region of interest" description="Disordered" evidence="2">
    <location>
        <begin position="104"/>
        <end position="125"/>
    </location>
</feature>
<feature type="compositionally biased region" description="Pro residues" evidence="2">
    <location>
        <begin position="110"/>
        <end position="119"/>
    </location>
</feature>
<name>MINC_SALDC</name>
<keyword id="KW-0131">Cell cycle</keyword>
<keyword id="KW-0132">Cell division</keyword>
<keyword id="KW-0717">Septation</keyword>
<comment type="function">
    <text evidence="1">Cell division inhibitor that blocks the formation of polar Z ring septums. Rapidly oscillates between the poles of the cell to destabilize FtsZ filaments that have formed before they mature into polar Z rings. Prevents FtsZ polymerization.</text>
</comment>
<comment type="subunit">
    <text evidence="1">Interacts with MinD and FtsZ.</text>
</comment>
<comment type="similarity">
    <text evidence="1">Belongs to the MinC family.</text>
</comment>
<evidence type="ECO:0000255" key="1">
    <source>
        <dbReference type="HAMAP-Rule" id="MF_00267"/>
    </source>
</evidence>
<evidence type="ECO:0000256" key="2">
    <source>
        <dbReference type="SAM" id="MobiDB-lite"/>
    </source>
</evidence>
<protein>
    <recommendedName>
        <fullName evidence="1">Probable septum site-determining protein MinC</fullName>
    </recommendedName>
</protein>
<dbReference type="EMBL" id="CP001144">
    <property type="protein sequence ID" value="ACH73784.1"/>
    <property type="molecule type" value="Genomic_DNA"/>
</dbReference>
<dbReference type="RefSeq" id="WP_000072527.1">
    <property type="nucleotide sequence ID" value="NC_011205.1"/>
</dbReference>
<dbReference type="SMR" id="B5FTL9"/>
<dbReference type="KEGG" id="sed:SeD_A1503"/>
<dbReference type="HOGENOM" id="CLU_067812_0_1_6"/>
<dbReference type="Proteomes" id="UP000008322">
    <property type="component" value="Chromosome"/>
</dbReference>
<dbReference type="GO" id="GO:0000902">
    <property type="term" value="P:cell morphogenesis"/>
    <property type="evidence" value="ECO:0007669"/>
    <property type="project" value="InterPro"/>
</dbReference>
<dbReference type="GO" id="GO:0000917">
    <property type="term" value="P:division septum assembly"/>
    <property type="evidence" value="ECO:0007669"/>
    <property type="project" value="UniProtKB-KW"/>
</dbReference>
<dbReference type="GO" id="GO:0051302">
    <property type="term" value="P:regulation of cell division"/>
    <property type="evidence" value="ECO:0007669"/>
    <property type="project" value="InterPro"/>
</dbReference>
<dbReference type="GO" id="GO:1901891">
    <property type="term" value="P:regulation of cell septum assembly"/>
    <property type="evidence" value="ECO:0007669"/>
    <property type="project" value="InterPro"/>
</dbReference>
<dbReference type="FunFam" id="2.160.20.70:FF:000002">
    <property type="entry name" value="Probable septum site-determining protein MinC"/>
    <property type="match status" value="1"/>
</dbReference>
<dbReference type="Gene3D" id="2.160.20.70">
    <property type="match status" value="1"/>
</dbReference>
<dbReference type="Gene3D" id="3.30.70.260">
    <property type="match status" value="1"/>
</dbReference>
<dbReference type="HAMAP" id="MF_00267">
    <property type="entry name" value="MinC"/>
    <property type="match status" value="1"/>
</dbReference>
<dbReference type="InterPro" id="IPR016098">
    <property type="entry name" value="CAP/MinC_C"/>
</dbReference>
<dbReference type="InterPro" id="IPR013033">
    <property type="entry name" value="MinC"/>
</dbReference>
<dbReference type="InterPro" id="IPR036145">
    <property type="entry name" value="MinC_C_sf"/>
</dbReference>
<dbReference type="InterPro" id="IPR007874">
    <property type="entry name" value="MinC_N"/>
</dbReference>
<dbReference type="InterPro" id="IPR005526">
    <property type="entry name" value="Septum_form_inhib_MinC_C"/>
</dbReference>
<dbReference type="NCBIfam" id="TIGR01222">
    <property type="entry name" value="minC"/>
    <property type="match status" value="1"/>
</dbReference>
<dbReference type="PANTHER" id="PTHR34108">
    <property type="entry name" value="SEPTUM SITE-DETERMINING PROTEIN MINC"/>
    <property type="match status" value="1"/>
</dbReference>
<dbReference type="PANTHER" id="PTHR34108:SF1">
    <property type="entry name" value="SEPTUM SITE-DETERMINING PROTEIN MINC"/>
    <property type="match status" value="1"/>
</dbReference>
<dbReference type="Pfam" id="PF03775">
    <property type="entry name" value="MinC_C"/>
    <property type="match status" value="1"/>
</dbReference>
<dbReference type="Pfam" id="PF05209">
    <property type="entry name" value="MinC_N"/>
    <property type="match status" value="1"/>
</dbReference>
<dbReference type="SUPFAM" id="SSF63848">
    <property type="entry name" value="Cell-division inhibitor MinC, C-terminal domain"/>
    <property type="match status" value="1"/>
</dbReference>
<gene>
    <name evidence="1" type="primary">minC</name>
    <name type="ordered locus">SeD_A1503</name>
</gene>
<accession>B5FTL9</accession>
<organism>
    <name type="scientific">Salmonella dublin (strain CT_02021853)</name>
    <dbReference type="NCBI Taxonomy" id="439851"/>
    <lineage>
        <taxon>Bacteria</taxon>
        <taxon>Pseudomonadati</taxon>
        <taxon>Pseudomonadota</taxon>
        <taxon>Gammaproteobacteria</taxon>
        <taxon>Enterobacterales</taxon>
        <taxon>Enterobacteriaceae</taxon>
        <taxon>Salmonella</taxon>
    </lineage>
</organism>